<proteinExistence type="inferred from homology"/>
<comment type="function">
    <text evidence="1">Beta-glucosidases are one of a number of cellulolytic enzymes involved in the degradation of cellulosic biomass. Catalyzes the last step releasing glucose from the inhibitory cellobiose (By similarity).</text>
</comment>
<comment type="catalytic activity">
    <reaction>
        <text>Hydrolysis of terminal, non-reducing beta-D-glucosyl residues with release of beta-D-glucose.</text>
        <dbReference type="EC" id="3.2.1.21"/>
    </reaction>
</comment>
<comment type="pathway">
    <text>Glycan metabolism; cellulose degradation.</text>
</comment>
<comment type="subcellular location">
    <subcellularLocation>
        <location evidence="1">Secreted</location>
    </subcellularLocation>
</comment>
<comment type="similarity">
    <text evidence="4">Belongs to the glycosyl hydrolase 3 family.</text>
</comment>
<comment type="sequence caution" evidence="4">
    <conflict type="erroneous gene model prediction">
        <sequence resource="EMBL-CDS" id="EDP49759"/>
    </conflict>
</comment>
<accession>B0Y8M8</accession>
<protein>
    <recommendedName>
        <fullName>Probable beta-glucosidase J</fullName>
        <ecNumber>3.2.1.21</ecNumber>
    </recommendedName>
    <alternativeName>
        <fullName>Beta-D-glucoside glucohydrolase J</fullName>
    </alternativeName>
    <alternativeName>
        <fullName>Cellobiase J</fullName>
    </alternativeName>
    <alternativeName>
        <fullName>Gentiobiase J</fullName>
    </alternativeName>
</protein>
<name>BGLJ_ASPFC</name>
<feature type="chain" id="PRO_0000394892" description="Probable beta-glucosidase J">
    <location>
        <begin position="1"/>
        <end position="865"/>
    </location>
</feature>
<feature type="domain" description="PA14" evidence="3">
    <location>
        <begin position="411"/>
        <end position="579"/>
    </location>
</feature>
<feature type="active site" evidence="1">
    <location>
        <position position="233"/>
    </location>
</feature>
<feature type="glycosylation site" description="N-linked (GlcNAc...) asparagine" evidence="2">
    <location>
        <position position="330"/>
    </location>
</feature>
<feature type="glycosylation site" description="N-linked (GlcNAc...) asparagine" evidence="2">
    <location>
        <position position="447"/>
    </location>
</feature>
<feature type="glycosylation site" description="N-linked (GlcNAc...) asparagine" evidence="2">
    <location>
        <position position="503"/>
    </location>
</feature>
<feature type="glycosylation site" description="N-linked (GlcNAc...) asparagine" evidence="2">
    <location>
        <position position="764"/>
    </location>
</feature>
<sequence>MGSIDTVGMGQRAIDQIISELSLNEKVALLSGVDAWHTFAIPRLGIPSIRTTDGPNGARGTRYFNGVPSACLPCGTALGATFDRDLIFSLGQLLAAECRAKGAHVLLGPTINIQRGPLGGRGFESFSEDPVLSGLAAASYCSGVQDGGVVPTLKHLVCNDQEHERVAVSALVTPRALREIYLLPFQLAIQGARPGAVMTSYNKVNGLHASENPGLIRDILRGEWGYEGAVISDWFGTYSVADAVNAGLDLEMPGPTRFRGPALMHALTSNKVSEKTLNERVRKVLELVQLASRAGVPEYAPERKLNRPEDRALLRRAAGESVVLLKNDKNDSTNSPILPLDREKTTLVIGPNADLAAYCGGGSASLLAYYTVTPRQGIADKCGAEQVVFSQGCYGHKELPLLGEHLRTIETGQPGYTFRVYTEPPPASGSFKGSDSRTPVDELHMTNSSAFLMDYSHPQISGDTYYATLEGTFEPPESGVYEFGLTVAGTGLLYIDGVLVVDNKTVQRAGTSFFGIGTVEERGERYLEAGKKHHVFVEFGTAPTSNLQHHHGVVSFGPGGLRLGGCRKLDTDTAIQQAVQSAAQADQVVVCVGLSGDWESEGFDRPHMDLPPGTEELVNAVLAVQPNAVIVVQSGTPVTMPWADKAKALLQAWYGGNEAGNGIADVLFGDVNPSAKLPLTFPRELSQNPSYLSYRSERGRVLYSEDIYVGYRYYDTTGQPPLFRFGHGLSYSTFHLRDLTVRETAPYAANIKESSLRVSVTVSNTSARPGAEVVLVYVRPPAAACSVGRPVRELKGYEKVMLQPGETREVSITIPLGLATSFWDEGCDAWLSEKGLYFVEAVGTGEGNTLVAPLTVQVSRVWNGL</sequence>
<keyword id="KW-0119">Carbohydrate metabolism</keyword>
<keyword id="KW-0136">Cellulose degradation</keyword>
<keyword id="KW-0325">Glycoprotein</keyword>
<keyword id="KW-0326">Glycosidase</keyword>
<keyword id="KW-0378">Hydrolase</keyword>
<keyword id="KW-0624">Polysaccharide degradation</keyword>
<keyword id="KW-0964">Secreted</keyword>
<evidence type="ECO:0000250" key="1"/>
<evidence type="ECO:0000255" key="2"/>
<evidence type="ECO:0000255" key="3">
    <source>
        <dbReference type="PROSITE-ProRule" id="PRU01164"/>
    </source>
</evidence>
<evidence type="ECO:0000305" key="4"/>
<gene>
    <name type="primary">bglJ</name>
    <name type="ORF">AFUB_077900</name>
</gene>
<organism>
    <name type="scientific">Aspergillus fumigatus (strain CBS 144.89 / FGSC A1163 / CEA10)</name>
    <name type="common">Neosartorya fumigata</name>
    <dbReference type="NCBI Taxonomy" id="451804"/>
    <lineage>
        <taxon>Eukaryota</taxon>
        <taxon>Fungi</taxon>
        <taxon>Dikarya</taxon>
        <taxon>Ascomycota</taxon>
        <taxon>Pezizomycotina</taxon>
        <taxon>Eurotiomycetes</taxon>
        <taxon>Eurotiomycetidae</taxon>
        <taxon>Eurotiales</taxon>
        <taxon>Aspergillaceae</taxon>
        <taxon>Aspergillus</taxon>
        <taxon>Aspergillus subgen. Fumigati</taxon>
    </lineage>
</organism>
<dbReference type="EC" id="3.2.1.21"/>
<dbReference type="EMBL" id="DS499599">
    <property type="protein sequence ID" value="EDP49759.1"/>
    <property type="status" value="ALT_SEQ"/>
    <property type="molecule type" value="Genomic_DNA"/>
</dbReference>
<dbReference type="SMR" id="B0Y8M8"/>
<dbReference type="GlyCosmos" id="B0Y8M8">
    <property type="glycosylation" value="4 sites, No reported glycans"/>
</dbReference>
<dbReference type="OrthoDB" id="28504at5052"/>
<dbReference type="PhylomeDB" id="B0Y8M8"/>
<dbReference type="UniPathway" id="UPA00696"/>
<dbReference type="Proteomes" id="UP000001699">
    <property type="component" value="Unassembled WGS sequence"/>
</dbReference>
<dbReference type="GO" id="GO:0005576">
    <property type="term" value="C:extracellular region"/>
    <property type="evidence" value="ECO:0007669"/>
    <property type="project" value="UniProtKB-SubCell"/>
</dbReference>
<dbReference type="GO" id="GO:0008422">
    <property type="term" value="F:beta-glucosidase activity"/>
    <property type="evidence" value="ECO:0007669"/>
    <property type="project" value="UniProtKB-EC"/>
</dbReference>
<dbReference type="GO" id="GO:0030245">
    <property type="term" value="P:cellulose catabolic process"/>
    <property type="evidence" value="ECO:0007669"/>
    <property type="project" value="UniProtKB-UniPathway"/>
</dbReference>
<dbReference type="FunFam" id="3.20.20.300:FF:000006">
    <property type="entry name" value="Beta-glucosidase H"/>
    <property type="match status" value="1"/>
</dbReference>
<dbReference type="FunFam" id="2.60.40.10:FF:000495">
    <property type="entry name" value="Periplasmic beta-glucosidase"/>
    <property type="match status" value="1"/>
</dbReference>
<dbReference type="FunFam" id="2.60.120.260:FF:000119">
    <property type="entry name" value="Probable beta-glucosidase I"/>
    <property type="match status" value="1"/>
</dbReference>
<dbReference type="Gene3D" id="2.60.120.260">
    <property type="entry name" value="Galactose-binding domain-like"/>
    <property type="match status" value="1"/>
</dbReference>
<dbReference type="Gene3D" id="3.40.50.1700">
    <property type="entry name" value="Glycoside hydrolase family 3 C-terminal domain"/>
    <property type="match status" value="1"/>
</dbReference>
<dbReference type="Gene3D" id="3.20.20.300">
    <property type="entry name" value="Glycoside hydrolase, family 3, N-terminal domain"/>
    <property type="match status" value="1"/>
</dbReference>
<dbReference type="Gene3D" id="2.60.40.10">
    <property type="entry name" value="Immunoglobulins"/>
    <property type="match status" value="1"/>
</dbReference>
<dbReference type="InterPro" id="IPR050288">
    <property type="entry name" value="Cellulose_deg_GH3"/>
</dbReference>
<dbReference type="InterPro" id="IPR026891">
    <property type="entry name" value="Fn3-like"/>
</dbReference>
<dbReference type="InterPro" id="IPR002772">
    <property type="entry name" value="Glyco_hydro_3_C"/>
</dbReference>
<dbReference type="InterPro" id="IPR036881">
    <property type="entry name" value="Glyco_hydro_3_C_sf"/>
</dbReference>
<dbReference type="InterPro" id="IPR001764">
    <property type="entry name" value="Glyco_hydro_3_N"/>
</dbReference>
<dbReference type="InterPro" id="IPR036962">
    <property type="entry name" value="Glyco_hydro_3_N_sf"/>
</dbReference>
<dbReference type="InterPro" id="IPR017853">
    <property type="entry name" value="Glycoside_hydrolase_SF"/>
</dbReference>
<dbReference type="InterPro" id="IPR013783">
    <property type="entry name" value="Ig-like_fold"/>
</dbReference>
<dbReference type="InterPro" id="IPR037524">
    <property type="entry name" value="PA14/GLEYA"/>
</dbReference>
<dbReference type="InterPro" id="IPR011658">
    <property type="entry name" value="PA14_dom"/>
</dbReference>
<dbReference type="PANTHER" id="PTHR42715">
    <property type="entry name" value="BETA-GLUCOSIDASE"/>
    <property type="match status" value="1"/>
</dbReference>
<dbReference type="PANTHER" id="PTHR42715:SF16">
    <property type="entry name" value="BETA-GLUCOSIDASE J-RELATED"/>
    <property type="match status" value="1"/>
</dbReference>
<dbReference type="Pfam" id="PF14310">
    <property type="entry name" value="Fn3-like"/>
    <property type="match status" value="1"/>
</dbReference>
<dbReference type="Pfam" id="PF00933">
    <property type="entry name" value="Glyco_hydro_3"/>
    <property type="match status" value="1"/>
</dbReference>
<dbReference type="Pfam" id="PF01915">
    <property type="entry name" value="Glyco_hydro_3_C"/>
    <property type="match status" value="1"/>
</dbReference>
<dbReference type="Pfam" id="PF07691">
    <property type="entry name" value="PA14"/>
    <property type="match status" value="1"/>
</dbReference>
<dbReference type="PRINTS" id="PR00133">
    <property type="entry name" value="GLHYDRLASE3"/>
</dbReference>
<dbReference type="SMART" id="SM01217">
    <property type="entry name" value="Fn3_like"/>
    <property type="match status" value="1"/>
</dbReference>
<dbReference type="SMART" id="SM00758">
    <property type="entry name" value="PA14"/>
    <property type="match status" value="1"/>
</dbReference>
<dbReference type="SUPFAM" id="SSF51445">
    <property type="entry name" value="(Trans)glycosidases"/>
    <property type="match status" value="1"/>
</dbReference>
<dbReference type="SUPFAM" id="SSF56988">
    <property type="entry name" value="Anthrax protective antigen"/>
    <property type="match status" value="1"/>
</dbReference>
<dbReference type="SUPFAM" id="SSF52279">
    <property type="entry name" value="Beta-D-glucan exohydrolase, C-terminal domain"/>
    <property type="match status" value="1"/>
</dbReference>
<dbReference type="PROSITE" id="PS51820">
    <property type="entry name" value="PA14"/>
    <property type="match status" value="1"/>
</dbReference>
<reference key="1">
    <citation type="journal article" date="2008" name="PLoS Genet.">
        <title>Genomic islands in the pathogenic filamentous fungus Aspergillus fumigatus.</title>
        <authorList>
            <person name="Fedorova N.D."/>
            <person name="Khaldi N."/>
            <person name="Joardar V.S."/>
            <person name="Maiti R."/>
            <person name="Amedeo P."/>
            <person name="Anderson M.J."/>
            <person name="Crabtree J."/>
            <person name="Silva J.C."/>
            <person name="Badger J.H."/>
            <person name="Albarraq A."/>
            <person name="Angiuoli S."/>
            <person name="Bussey H."/>
            <person name="Bowyer P."/>
            <person name="Cotty P.J."/>
            <person name="Dyer P.S."/>
            <person name="Egan A."/>
            <person name="Galens K."/>
            <person name="Fraser-Liggett C.M."/>
            <person name="Haas B.J."/>
            <person name="Inman J.M."/>
            <person name="Kent R."/>
            <person name="Lemieux S."/>
            <person name="Malavazi I."/>
            <person name="Orvis J."/>
            <person name="Roemer T."/>
            <person name="Ronning C.M."/>
            <person name="Sundaram J.P."/>
            <person name="Sutton G."/>
            <person name="Turner G."/>
            <person name="Venter J.C."/>
            <person name="White O.R."/>
            <person name="Whitty B.R."/>
            <person name="Youngman P."/>
            <person name="Wolfe K.H."/>
            <person name="Goldman G.H."/>
            <person name="Wortman J.R."/>
            <person name="Jiang B."/>
            <person name="Denning D.W."/>
            <person name="Nierman W.C."/>
        </authorList>
    </citation>
    <scope>NUCLEOTIDE SEQUENCE [LARGE SCALE GENOMIC DNA]</scope>
    <source>
        <strain>CBS 144.89 / FGSC A1163 / CEA10</strain>
    </source>
</reference>